<keyword id="KW-1185">Reference proteome</keyword>
<keyword id="KW-0687">Ribonucleoprotein</keyword>
<keyword id="KW-0689">Ribosomal protein</keyword>
<keyword id="KW-0694">RNA-binding</keyword>
<keyword id="KW-0699">rRNA-binding</keyword>
<dbReference type="EMBL" id="CR954253">
    <property type="protein sequence ID" value="CAI97233.1"/>
    <property type="molecule type" value="Genomic_DNA"/>
</dbReference>
<dbReference type="RefSeq" id="WP_003620831.1">
    <property type="nucleotide sequence ID" value="NZ_JQAV01000001.1"/>
</dbReference>
<dbReference type="SMR" id="Q1GBL6"/>
<dbReference type="STRING" id="390333.Ldb0398"/>
<dbReference type="KEGG" id="ldb:Ldb0398"/>
<dbReference type="PATRIC" id="fig|390333.13.peg.392"/>
<dbReference type="eggNOG" id="COG0089">
    <property type="taxonomic scope" value="Bacteria"/>
</dbReference>
<dbReference type="HOGENOM" id="CLU_037562_3_2_9"/>
<dbReference type="BioCyc" id="LDEL390333:LDB_RS01685-MONOMER"/>
<dbReference type="Proteomes" id="UP000001259">
    <property type="component" value="Chromosome"/>
</dbReference>
<dbReference type="GO" id="GO:1990904">
    <property type="term" value="C:ribonucleoprotein complex"/>
    <property type="evidence" value="ECO:0007669"/>
    <property type="project" value="UniProtKB-KW"/>
</dbReference>
<dbReference type="GO" id="GO:0005840">
    <property type="term" value="C:ribosome"/>
    <property type="evidence" value="ECO:0007669"/>
    <property type="project" value="UniProtKB-KW"/>
</dbReference>
<dbReference type="GO" id="GO:0019843">
    <property type="term" value="F:rRNA binding"/>
    <property type="evidence" value="ECO:0007669"/>
    <property type="project" value="UniProtKB-UniRule"/>
</dbReference>
<dbReference type="GO" id="GO:0003735">
    <property type="term" value="F:structural constituent of ribosome"/>
    <property type="evidence" value="ECO:0007669"/>
    <property type="project" value="InterPro"/>
</dbReference>
<dbReference type="GO" id="GO:0006412">
    <property type="term" value="P:translation"/>
    <property type="evidence" value="ECO:0007669"/>
    <property type="project" value="UniProtKB-UniRule"/>
</dbReference>
<dbReference type="FunFam" id="3.30.70.330:FF:000001">
    <property type="entry name" value="50S ribosomal protein L23"/>
    <property type="match status" value="1"/>
</dbReference>
<dbReference type="Gene3D" id="3.30.70.330">
    <property type="match status" value="1"/>
</dbReference>
<dbReference type="HAMAP" id="MF_01369_B">
    <property type="entry name" value="Ribosomal_uL23_B"/>
    <property type="match status" value="1"/>
</dbReference>
<dbReference type="InterPro" id="IPR012677">
    <property type="entry name" value="Nucleotide-bd_a/b_plait_sf"/>
</dbReference>
<dbReference type="InterPro" id="IPR013025">
    <property type="entry name" value="Ribosomal_uL23-like"/>
</dbReference>
<dbReference type="InterPro" id="IPR012678">
    <property type="entry name" value="Ribosomal_uL23/eL15/eS24_sf"/>
</dbReference>
<dbReference type="NCBIfam" id="NF004363">
    <property type="entry name" value="PRK05738.2-4"/>
    <property type="match status" value="1"/>
</dbReference>
<dbReference type="PANTHER" id="PTHR11620">
    <property type="entry name" value="60S RIBOSOMAL PROTEIN L23A"/>
    <property type="match status" value="1"/>
</dbReference>
<dbReference type="Pfam" id="PF00276">
    <property type="entry name" value="Ribosomal_L23"/>
    <property type="match status" value="1"/>
</dbReference>
<dbReference type="SUPFAM" id="SSF54189">
    <property type="entry name" value="Ribosomal proteins S24e, L23 and L15e"/>
    <property type="match status" value="1"/>
</dbReference>
<sequence>MDARDIILRPVITEKSADLMDSKKYTFDVALTATKLQVRDAIEEIFDVKVKSVNIMNVRGKEKRVGRYTGKIARRRKAIVALTEDSNDIKIFKDENNE</sequence>
<name>RL23_LACDA</name>
<comment type="function">
    <text evidence="1">One of the early assembly proteins it binds 23S rRNA. One of the proteins that surrounds the polypeptide exit tunnel on the outside of the ribosome. Forms the main docking site for trigger factor binding to the ribosome.</text>
</comment>
<comment type="subunit">
    <text evidence="1">Part of the 50S ribosomal subunit. Contacts protein L29, and trigger factor when it is bound to the ribosome.</text>
</comment>
<comment type="similarity">
    <text evidence="1">Belongs to the universal ribosomal protein uL23 family.</text>
</comment>
<proteinExistence type="inferred from homology"/>
<gene>
    <name evidence="1" type="primary">rplW</name>
    <name type="ordered locus">Ldb0398</name>
</gene>
<feature type="chain" id="PRO_1000068090" description="Large ribosomal subunit protein uL23">
    <location>
        <begin position="1"/>
        <end position="98"/>
    </location>
</feature>
<reference key="1">
    <citation type="journal article" date="2006" name="Proc. Natl. Acad. Sci. U.S.A.">
        <title>The complete genome sequence of Lactobacillus bulgaricus reveals extensive and ongoing reductive evolution.</title>
        <authorList>
            <person name="van de Guchte M."/>
            <person name="Penaud S."/>
            <person name="Grimaldi C."/>
            <person name="Barbe V."/>
            <person name="Bryson K."/>
            <person name="Nicolas P."/>
            <person name="Robert C."/>
            <person name="Oztas S."/>
            <person name="Mangenot S."/>
            <person name="Couloux A."/>
            <person name="Loux V."/>
            <person name="Dervyn R."/>
            <person name="Bossy R."/>
            <person name="Bolotin A."/>
            <person name="Batto J.-M."/>
            <person name="Walunas T."/>
            <person name="Gibrat J.-F."/>
            <person name="Bessieres P."/>
            <person name="Weissenbach J."/>
            <person name="Ehrlich S.D."/>
            <person name="Maguin E."/>
        </authorList>
    </citation>
    <scope>NUCLEOTIDE SEQUENCE [LARGE SCALE GENOMIC DNA]</scope>
    <source>
        <strain>ATCC 11842 / DSM 20081 / BCRC 10696 / JCM 1002 / NBRC 13953 / NCIMB 11778 / NCTC 12712 / WDCM 00102 / Lb 14</strain>
    </source>
</reference>
<accession>Q1GBL6</accession>
<protein>
    <recommendedName>
        <fullName evidence="1">Large ribosomal subunit protein uL23</fullName>
    </recommendedName>
    <alternativeName>
        <fullName evidence="2">50S ribosomal protein L23</fullName>
    </alternativeName>
</protein>
<evidence type="ECO:0000255" key="1">
    <source>
        <dbReference type="HAMAP-Rule" id="MF_01369"/>
    </source>
</evidence>
<evidence type="ECO:0000305" key="2"/>
<organism>
    <name type="scientific">Lactobacillus delbrueckii subsp. bulgaricus (strain ATCC 11842 / DSM 20081 / BCRC 10696 / JCM 1002 / NBRC 13953 / NCIMB 11778 / NCTC 12712 / WDCM 00102 / Lb 14)</name>
    <dbReference type="NCBI Taxonomy" id="390333"/>
    <lineage>
        <taxon>Bacteria</taxon>
        <taxon>Bacillati</taxon>
        <taxon>Bacillota</taxon>
        <taxon>Bacilli</taxon>
        <taxon>Lactobacillales</taxon>
        <taxon>Lactobacillaceae</taxon>
        <taxon>Lactobacillus</taxon>
    </lineage>
</organism>